<gene>
    <name type="ordered locus">DR_1206</name>
</gene>
<evidence type="ECO:0000255" key="1">
    <source>
        <dbReference type="HAMAP-Rule" id="MF_00528"/>
    </source>
</evidence>
<evidence type="ECO:0000305" key="2"/>
<dbReference type="EC" id="3.6.1.9" evidence="1"/>
<dbReference type="EMBL" id="AE000513">
    <property type="protein sequence ID" value="AAF10776.1"/>
    <property type="molecule type" value="Genomic_DNA"/>
</dbReference>
<dbReference type="PIR" id="E75424">
    <property type="entry name" value="E75424"/>
</dbReference>
<dbReference type="RefSeq" id="NP_294930.1">
    <property type="nucleotide sequence ID" value="NC_001263.1"/>
</dbReference>
<dbReference type="RefSeq" id="WP_010887849.1">
    <property type="nucleotide sequence ID" value="NC_001263.1"/>
</dbReference>
<dbReference type="SMR" id="Q9RV24"/>
<dbReference type="FunCoup" id="Q9RV24">
    <property type="interactions" value="383"/>
</dbReference>
<dbReference type="STRING" id="243230.DR_1206"/>
<dbReference type="PaxDb" id="243230-DR_1206"/>
<dbReference type="EnsemblBacteria" id="AAF10776">
    <property type="protein sequence ID" value="AAF10776"/>
    <property type="gene ID" value="DR_1206"/>
</dbReference>
<dbReference type="GeneID" id="69517452"/>
<dbReference type="KEGG" id="dra:DR_1206"/>
<dbReference type="eggNOG" id="COG0424">
    <property type="taxonomic scope" value="Bacteria"/>
</dbReference>
<dbReference type="HOGENOM" id="CLU_040416_0_0_0"/>
<dbReference type="InParanoid" id="Q9RV24"/>
<dbReference type="OrthoDB" id="9807767at2"/>
<dbReference type="Proteomes" id="UP000002524">
    <property type="component" value="Chromosome 1"/>
</dbReference>
<dbReference type="GO" id="GO:0005737">
    <property type="term" value="C:cytoplasm"/>
    <property type="evidence" value="ECO:0007669"/>
    <property type="project" value="UniProtKB-SubCell"/>
</dbReference>
<dbReference type="GO" id="GO:0036218">
    <property type="term" value="F:dTTP diphosphatase activity"/>
    <property type="evidence" value="ECO:0007669"/>
    <property type="project" value="RHEA"/>
</dbReference>
<dbReference type="GO" id="GO:0047429">
    <property type="term" value="F:nucleoside triphosphate diphosphatase activity"/>
    <property type="evidence" value="ECO:0000318"/>
    <property type="project" value="GO_Central"/>
</dbReference>
<dbReference type="GO" id="GO:0036221">
    <property type="term" value="F:UTP diphosphatase activity"/>
    <property type="evidence" value="ECO:0007669"/>
    <property type="project" value="RHEA"/>
</dbReference>
<dbReference type="GO" id="GO:0009117">
    <property type="term" value="P:nucleotide metabolic process"/>
    <property type="evidence" value="ECO:0007669"/>
    <property type="project" value="UniProtKB-KW"/>
</dbReference>
<dbReference type="CDD" id="cd00555">
    <property type="entry name" value="Maf"/>
    <property type="match status" value="1"/>
</dbReference>
<dbReference type="FunFam" id="3.90.950.10:FF:000005">
    <property type="entry name" value="7-methyl-GTP pyrophosphatase"/>
    <property type="match status" value="1"/>
</dbReference>
<dbReference type="Gene3D" id="3.90.950.10">
    <property type="match status" value="1"/>
</dbReference>
<dbReference type="HAMAP" id="MF_00528">
    <property type="entry name" value="Maf"/>
    <property type="match status" value="1"/>
</dbReference>
<dbReference type="InterPro" id="IPR029001">
    <property type="entry name" value="ITPase-like_fam"/>
</dbReference>
<dbReference type="InterPro" id="IPR003697">
    <property type="entry name" value="Maf-like"/>
</dbReference>
<dbReference type="NCBIfam" id="TIGR00172">
    <property type="entry name" value="maf"/>
    <property type="match status" value="1"/>
</dbReference>
<dbReference type="NCBIfam" id="NF010941">
    <property type="entry name" value="PRK14361.1"/>
    <property type="match status" value="1"/>
</dbReference>
<dbReference type="PANTHER" id="PTHR43213">
    <property type="entry name" value="BIFUNCTIONAL DTTP/UTP PYROPHOSPHATASE/METHYLTRANSFERASE PROTEIN-RELATED"/>
    <property type="match status" value="1"/>
</dbReference>
<dbReference type="PANTHER" id="PTHR43213:SF5">
    <property type="entry name" value="BIFUNCTIONAL DTTP_UTP PYROPHOSPHATASE_METHYLTRANSFERASE PROTEIN-RELATED"/>
    <property type="match status" value="1"/>
</dbReference>
<dbReference type="Pfam" id="PF02545">
    <property type="entry name" value="Maf"/>
    <property type="match status" value="1"/>
</dbReference>
<dbReference type="PIRSF" id="PIRSF006305">
    <property type="entry name" value="Maf"/>
    <property type="match status" value="1"/>
</dbReference>
<dbReference type="SUPFAM" id="SSF52972">
    <property type="entry name" value="ITPase-like"/>
    <property type="match status" value="1"/>
</dbReference>
<comment type="function">
    <text evidence="1">Nucleoside triphosphate pyrophosphatase that hydrolyzes dTTP and UTP. May have a dual role in cell division arrest and in preventing the incorporation of modified nucleotides into cellular nucleic acids.</text>
</comment>
<comment type="catalytic activity">
    <reaction evidence="1">
        <text>dTTP + H2O = dTMP + diphosphate + H(+)</text>
        <dbReference type="Rhea" id="RHEA:28534"/>
        <dbReference type="ChEBI" id="CHEBI:15377"/>
        <dbReference type="ChEBI" id="CHEBI:15378"/>
        <dbReference type="ChEBI" id="CHEBI:33019"/>
        <dbReference type="ChEBI" id="CHEBI:37568"/>
        <dbReference type="ChEBI" id="CHEBI:63528"/>
        <dbReference type="EC" id="3.6.1.9"/>
    </reaction>
</comment>
<comment type="catalytic activity">
    <reaction evidence="1">
        <text>UTP + H2O = UMP + diphosphate + H(+)</text>
        <dbReference type="Rhea" id="RHEA:29395"/>
        <dbReference type="ChEBI" id="CHEBI:15377"/>
        <dbReference type="ChEBI" id="CHEBI:15378"/>
        <dbReference type="ChEBI" id="CHEBI:33019"/>
        <dbReference type="ChEBI" id="CHEBI:46398"/>
        <dbReference type="ChEBI" id="CHEBI:57865"/>
        <dbReference type="EC" id="3.6.1.9"/>
    </reaction>
</comment>
<comment type="cofactor">
    <cofactor evidence="1">
        <name>a divalent metal cation</name>
        <dbReference type="ChEBI" id="CHEBI:60240"/>
    </cofactor>
</comment>
<comment type="subcellular location">
    <subcellularLocation>
        <location evidence="1 2">Cytoplasm</location>
    </subcellularLocation>
</comment>
<comment type="similarity">
    <text evidence="1">Belongs to the Maf family. YhdE subfamily.</text>
</comment>
<proteinExistence type="inferred from homology"/>
<organism>
    <name type="scientific">Deinococcus radiodurans (strain ATCC 13939 / DSM 20539 / JCM 16871 / CCUG 27074 / LMG 4051 / NBRC 15346 / NCIMB 9279 / VKM B-1422 / R1)</name>
    <dbReference type="NCBI Taxonomy" id="243230"/>
    <lineage>
        <taxon>Bacteria</taxon>
        <taxon>Thermotogati</taxon>
        <taxon>Deinococcota</taxon>
        <taxon>Deinococci</taxon>
        <taxon>Deinococcales</taxon>
        <taxon>Deinococcaceae</taxon>
        <taxon>Deinococcus</taxon>
    </lineage>
</organism>
<name>NTPPA_DEIRA</name>
<keyword id="KW-0963">Cytoplasm</keyword>
<keyword id="KW-0378">Hydrolase</keyword>
<keyword id="KW-0546">Nucleotide metabolism</keyword>
<keyword id="KW-1185">Reference proteome</keyword>
<sequence>MPAETAPRVILASGSPRRRELLGNLGVPFEVVVSGEAEDSQETDPARLALELGQLKARAVAAQHPDAVVIAADTVVALGGTLLAKPADEAENAAFLRQQSGKTQQVYTGVCVISPAGEQSGVERTDVTFRALTEAEVTFYARSGEGLDKAGGYGIQGVGMALIERVEGDYSNIVGFPLALVLRLLRGAGVSAFGV</sequence>
<feature type="chain" id="PRO_0000123019" description="dTTP/UTP pyrophosphatase">
    <location>
        <begin position="1"/>
        <end position="195"/>
    </location>
</feature>
<feature type="active site" description="Proton acceptor" evidence="1">
    <location>
        <position position="73"/>
    </location>
</feature>
<feature type="site" description="Important for substrate specificity" evidence="1">
    <location>
        <position position="17"/>
    </location>
</feature>
<feature type="site" description="Important for substrate specificity" evidence="1">
    <location>
        <position position="74"/>
    </location>
</feature>
<feature type="site" description="Important for substrate specificity" evidence="1">
    <location>
        <position position="156"/>
    </location>
</feature>
<accession>Q9RV24</accession>
<protein>
    <recommendedName>
        <fullName evidence="1">dTTP/UTP pyrophosphatase</fullName>
        <shortName evidence="1">dTTPase/UTPase</shortName>
        <ecNumber evidence="1">3.6.1.9</ecNumber>
    </recommendedName>
    <alternativeName>
        <fullName evidence="1">Nucleoside triphosphate pyrophosphatase</fullName>
    </alternativeName>
    <alternativeName>
        <fullName evidence="1">Nucleotide pyrophosphatase</fullName>
        <shortName evidence="1">Nucleotide PPase</shortName>
    </alternativeName>
</protein>
<reference key="1">
    <citation type="journal article" date="1999" name="Science">
        <title>Genome sequence of the radioresistant bacterium Deinococcus radiodurans R1.</title>
        <authorList>
            <person name="White O."/>
            <person name="Eisen J.A."/>
            <person name="Heidelberg J.F."/>
            <person name="Hickey E.K."/>
            <person name="Peterson J.D."/>
            <person name="Dodson R.J."/>
            <person name="Haft D.H."/>
            <person name="Gwinn M.L."/>
            <person name="Nelson W.C."/>
            <person name="Richardson D.L."/>
            <person name="Moffat K.S."/>
            <person name="Qin H."/>
            <person name="Jiang L."/>
            <person name="Pamphile W."/>
            <person name="Crosby M."/>
            <person name="Shen M."/>
            <person name="Vamathevan J.J."/>
            <person name="Lam P."/>
            <person name="McDonald L.A."/>
            <person name="Utterback T.R."/>
            <person name="Zalewski C."/>
            <person name="Makarova K.S."/>
            <person name="Aravind L."/>
            <person name="Daly M.J."/>
            <person name="Minton K.W."/>
            <person name="Fleischmann R.D."/>
            <person name="Ketchum K.A."/>
            <person name="Nelson K.E."/>
            <person name="Salzberg S.L."/>
            <person name="Smith H.O."/>
            <person name="Venter J.C."/>
            <person name="Fraser C.M."/>
        </authorList>
    </citation>
    <scope>NUCLEOTIDE SEQUENCE [LARGE SCALE GENOMIC DNA]</scope>
    <source>
        <strain>ATCC 13939 / DSM 20539 / JCM 16871 / CCUG 27074 / LMG 4051 / NBRC 15346 / NCIMB 9279 / VKM B-1422 / R1</strain>
    </source>
</reference>